<proteinExistence type="evidence at protein level"/>
<protein>
    <recommendedName>
        <fullName evidence="3">NHS-like protein 2</fullName>
    </recommendedName>
</protein>
<keyword id="KW-0025">Alternative splicing</keyword>
<keyword id="KW-0597">Phosphoprotein</keyword>
<keyword id="KW-1267">Proteomics identification</keyword>
<keyword id="KW-1185">Reference proteome</keyword>
<name>NHSL2_HUMAN</name>
<comment type="interaction">
    <interactant intactId="EBI-2859639">
        <id>Q5HYW2</id>
    </interactant>
    <interactant intactId="EBI-11743294">
        <id>Q8IZP0-5</id>
        <label>ABI1</label>
    </interactant>
    <organismsDiffer>false</organismsDiffer>
    <experiments>3</experiments>
</comment>
<comment type="interaction">
    <interactant intactId="EBI-2859639">
        <id>Q5HYW2</id>
    </interactant>
    <interactant intactId="EBI-11096309">
        <id>Q9NYB9-2</id>
        <label>ABI2</label>
    </interactant>
    <organismsDiffer>false</organismsDiffer>
    <experiments>9</experiments>
</comment>
<comment type="interaction">
    <interactant intactId="EBI-2859639">
        <id>Q5HYW2</id>
    </interactant>
    <interactant intactId="EBI-742038">
        <id>Q9P2A4</id>
        <label>ABI3</label>
    </interactant>
    <organismsDiffer>false</organismsDiffer>
    <experiments>3</experiments>
</comment>
<comment type="interaction">
    <interactant intactId="EBI-2859639">
        <id>Q5HYW2</id>
    </interactant>
    <interactant intactId="EBI-11957452">
        <id>Q4LE39-3</id>
        <label>ARID4B</label>
    </interactant>
    <organismsDiffer>false</organismsDiffer>
    <experiments>3</experiments>
</comment>
<comment type="interaction">
    <interactant intactId="EBI-2859639">
        <id>Q5HYW2</id>
    </interactant>
    <interactant intactId="EBI-930964">
        <id>P54253</id>
        <label>ATXN1</label>
    </interactant>
    <organismsDiffer>false</organismsDiffer>
    <experiments>3</experiments>
</comment>
<comment type="interaction">
    <interactant intactId="EBI-2859639">
        <id>Q5HYW2</id>
    </interactant>
    <interactant intactId="EBI-307461">
        <id>Q9Y297</id>
        <label>BTRC</label>
    </interactant>
    <organismsDiffer>false</organismsDiffer>
    <experiments>3</experiments>
</comment>
<comment type="interaction">
    <interactant intactId="EBI-2859639">
        <id>Q5HYW2</id>
    </interactant>
    <interactant intactId="EBI-347404">
        <id>O00299</id>
        <label>CLIC1</label>
    </interactant>
    <organismsDiffer>false</organismsDiffer>
    <experiments>3</experiments>
</comment>
<comment type="interaction">
    <interactant intactId="EBI-2859639">
        <id>Q5HYW2</id>
    </interactant>
    <interactant intactId="EBI-12748199">
        <id>Q14247-3</id>
        <label>CTTN</label>
    </interactant>
    <organismsDiffer>false</organismsDiffer>
    <experiments>3</experiments>
</comment>
<comment type="interaction">
    <interactant intactId="EBI-2859639">
        <id>Q5HYW2</id>
    </interactant>
    <interactant intactId="EBI-1176455">
        <id>P63172</id>
        <label>DYNLT1</label>
    </interactant>
    <organismsDiffer>false</organismsDiffer>
    <experiments>3</experiments>
</comment>
<comment type="interaction">
    <interactant intactId="EBI-2859639">
        <id>Q5HYW2</id>
    </interactant>
    <interactant intactId="EBI-739467">
        <id>Q9H8Y8</id>
        <label>GORASP2</label>
    </interactant>
    <organismsDiffer>false</organismsDiffer>
    <experiments>3</experiments>
</comment>
<comment type="interaction">
    <interactant intactId="EBI-2859639">
        <id>Q5HYW2</id>
    </interactant>
    <interactant intactId="EBI-7116203">
        <id>O75031</id>
        <label>HSF2BP</label>
    </interactant>
    <organismsDiffer>false</organismsDiffer>
    <experiments>3</experiments>
</comment>
<comment type="interaction">
    <interactant intactId="EBI-2859639">
        <id>Q5HYW2</id>
    </interactant>
    <interactant intactId="EBI-6509505">
        <id>Q0VD86</id>
        <label>INCA1</label>
    </interactant>
    <organismsDiffer>false</organismsDiffer>
    <experiments>3</experiments>
</comment>
<comment type="interaction">
    <interactant intactId="EBI-2859639">
        <id>Q5HYW2</id>
    </interactant>
    <interactant intactId="EBI-713568">
        <id>P45984</id>
        <label>MAPK9</label>
    </interactant>
    <organismsDiffer>false</organismsDiffer>
    <experiments>5</experiments>
</comment>
<comment type="interaction">
    <interactant intactId="EBI-2859639">
        <id>Q5HYW2</id>
    </interactant>
    <interactant intactId="EBI-11522433">
        <id>Q5JR59-3</id>
        <label>MTUS2</label>
    </interactant>
    <organismsDiffer>false</organismsDiffer>
    <experiments>3</experiments>
</comment>
<comment type="interaction">
    <interactant intactId="EBI-2859639">
        <id>Q5HYW2</id>
    </interactant>
    <interactant intactId="EBI-7950783">
        <id>Q96JP2</id>
        <label>MYO15B</label>
    </interactant>
    <organismsDiffer>false</organismsDiffer>
    <experiments>3</experiments>
</comment>
<comment type="interaction">
    <interactant intactId="EBI-2859639">
        <id>Q5HYW2</id>
    </interactant>
    <interactant intactId="EBI-389883">
        <id>P16333</id>
        <label>NCK1</label>
    </interactant>
    <organismsDiffer>false</organismsDiffer>
    <experiments>3</experiments>
</comment>
<comment type="interaction">
    <interactant intactId="EBI-2859639">
        <id>Q5HYW2</id>
    </interactant>
    <interactant intactId="EBI-713635">
        <id>O43639</id>
        <label>NCK2</label>
    </interactant>
    <organismsDiffer>false</organismsDiffer>
    <experiments>6</experiments>
</comment>
<comment type="interaction">
    <interactant intactId="EBI-2859639">
        <id>Q5HYW2</id>
    </interactant>
    <interactant intactId="EBI-10232538">
        <id>Q8WWB5</id>
        <label>PIH1D2</label>
    </interactant>
    <organismsDiffer>false</organismsDiffer>
    <experiments>3</experiments>
</comment>
<comment type="interaction">
    <interactant intactId="EBI-2859639">
        <id>Q5HYW2</id>
    </interactant>
    <interactant intactId="EBI-476768">
        <id>P53350</id>
        <label>PLK1</label>
    </interactant>
    <organismsDiffer>false</organismsDiffer>
    <experiments>3</experiments>
</comment>
<comment type="interaction">
    <interactant intactId="EBI-2859639">
        <id>Q5HYW2</id>
    </interactant>
    <interactant intactId="EBI-1105153">
        <id>Q96KQ4</id>
        <label>PPP1R13B</label>
    </interactant>
    <organismsDiffer>false</organismsDiffer>
    <experiments>3</experiments>
</comment>
<comment type="interaction">
    <interactant intactId="EBI-2859639">
        <id>Q5HYW2</id>
    </interactant>
    <interactant intactId="EBI-741237">
        <id>O60504</id>
        <label>SORBS3</label>
    </interactant>
    <organismsDiffer>false</organismsDiffer>
    <experiments>3</experiments>
</comment>
<comment type="interaction">
    <interactant intactId="EBI-2859639">
        <id>Q5HYW2</id>
    </interactant>
    <interactant intactId="EBI-717422">
        <id>Q12800</id>
        <label>TFCP2</label>
    </interactant>
    <organismsDiffer>false</organismsDiffer>
    <experiments>3</experiments>
</comment>
<comment type="interaction">
    <interactant intactId="EBI-2859639">
        <id>Q5HYW2</id>
    </interactant>
    <interactant intactId="EBI-11952721">
        <id>Q05BL1</id>
        <label>TP53BP2</label>
    </interactant>
    <organismsDiffer>false</organismsDiffer>
    <experiments>3</experiments>
</comment>
<comment type="interaction">
    <interactant intactId="EBI-2859639">
        <id>Q5HYW2</id>
    </interactant>
    <interactant intactId="EBI-355744">
        <id>Q12933</id>
        <label>TRAF2</label>
    </interactant>
    <organismsDiffer>false</organismsDiffer>
    <experiments>3</experiments>
</comment>
<comment type="interaction">
    <interactant intactId="EBI-2859639">
        <id>Q5HYW2</id>
    </interactant>
    <interactant intactId="EBI-359832">
        <id>P61981</id>
        <label>YWHAG</label>
    </interactant>
    <organismsDiffer>false</organismsDiffer>
    <experiments>3</experiments>
</comment>
<comment type="interaction">
    <interactant intactId="EBI-2859639">
        <id>Q5HYW2</id>
    </interactant>
    <interactant intactId="EBI-306940">
        <id>Q04917</id>
        <label>YWHAH</label>
    </interactant>
    <organismsDiffer>false</organismsDiffer>
    <experiments>3</experiments>
</comment>
<comment type="alternative products">
    <event type="alternative splicing"/>
    <isoform>
        <id>Q5HYW2-1</id>
        <name>1</name>
        <sequence type="displayed"/>
    </isoform>
    <isoform>
        <id>Q5HYW2-2</id>
        <name>2</name>
        <sequence type="described" ref="VSP_060098 VSP_060099"/>
    </isoform>
</comment>
<comment type="similarity">
    <text evidence="3">Belongs to the NHS family.</text>
</comment>
<organism>
    <name type="scientific">Homo sapiens</name>
    <name type="common">Human</name>
    <dbReference type="NCBI Taxonomy" id="9606"/>
    <lineage>
        <taxon>Eukaryota</taxon>
        <taxon>Metazoa</taxon>
        <taxon>Chordata</taxon>
        <taxon>Craniata</taxon>
        <taxon>Vertebrata</taxon>
        <taxon>Euteleostomi</taxon>
        <taxon>Mammalia</taxon>
        <taxon>Eutheria</taxon>
        <taxon>Euarchontoglires</taxon>
        <taxon>Primates</taxon>
        <taxon>Haplorrhini</taxon>
        <taxon>Catarrhini</taxon>
        <taxon>Hominidae</taxon>
        <taxon>Homo</taxon>
    </lineage>
</organism>
<feature type="chain" id="PRO_0000341355" description="NHS-like protein 2">
    <location>
        <begin position="1"/>
        <end position="1225"/>
    </location>
</feature>
<feature type="region of interest" description="Disordered" evidence="2">
    <location>
        <begin position="161"/>
        <end position="180"/>
    </location>
</feature>
<feature type="region of interest" description="Disordered" evidence="2">
    <location>
        <begin position="193"/>
        <end position="213"/>
    </location>
</feature>
<feature type="region of interest" description="Disordered" evidence="2">
    <location>
        <begin position="291"/>
        <end position="371"/>
    </location>
</feature>
<feature type="region of interest" description="Disordered" evidence="2">
    <location>
        <begin position="466"/>
        <end position="510"/>
    </location>
</feature>
<feature type="region of interest" description="Disordered" evidence="2">
    <location>
        <begin position="543"/>
        <end position="632"/>
    </location>
</feature>
<feature type="region of interest" description="Disordered" evidence="2">
    <location>
        <begin position="670"/>
        <end position="766"/>
    </location>
</feature>
<feature type="region of interest" description="Disordered" evidence="2">
    <location>
        <begin position="812"/>
        <end position="1009"/>
    </location>
</feature>
<feature type="region of interest" description="Disordered" evidence="2">
    <location>
        <begin position="1042"/>
        <end position="1093"/>
    </location>
</feature>
<feature type="region of interest" description="Disordered" evidence="2">
    <location>
        <begin position="1128"/>
        <end position="1203"/>
    </location>
</feature>
<feature type="compositionally biased region" description="Polar residues" evidence="2">
    <location>
        <begin position="291"/>
        <end position="315"/>
    </location>
</feature>
<feature type="compositionally biased region" description="Polar residues" evidence="2">
    <location>
        <begin position="339"/>
        <end position="350"/>
    </location>
</feature>
<feature type="compositionally biased region" description="Basic residues" evidence="2">
    <location>
        <begin position="552"/>
        <end position="568"/>
    </location>
</feature>
<feature type="compositionally biased region" description="Low complexity" evidence="2">
    <location>
        <begin position="675"/>
        <end position="688"/>
    </location>
</feature>
<feature type="compositionally biased region" description="Polar residues" evidence="2">
    <location>
        <begin position="710"/>
        <end position="730"/>
    </location>
</feature>
<feature type="compositionally biased region" description="Polar residues" evidence="2">
    <location>
        <begin position="812"/>
        <end position="827"/>
    </location>
</feature>
<feature type="compositionally biased region" description="Acidic residues" evidence="2">
    <location>
        <begin position="841"/>
        <end position="851"/>
    </location>
</feature>
<feature type="compositionally biased region" description="Basic and acidic residues" evidence="2">
    <location>
        <begin position="852"/>
        <end position="867"/>
    </location>
</feature>
<feature type="compositionally biased region" description="Polar residues" evidence="2">
    <location>
        <begin position="939"/>
        <end position="968"/>
    </location>
</feature>
<feature type="compositionally biased region" description="Polar residues" evidence="2">
    <location>
        <begin position="1054"/>
        <end position="1065"/>
    </location>
</feature>
<feature type="compositionally biased region" description="Basic and acidic residues" evidence="2">
    <location>
        <begin position="1082"/>
        <end position="1093"/>
    </location>
</feature>
<feature type="compositionally biased region" description="Polar residues" evidence="2">
    <location>
        <begin position="1138"/>
        <end position="1155"/>
    </location>
</feature>
<feature type="compositionally biased region" description="Low complexity" evidence="2">
    <location>
        <begin position="1156"/>
        <end position="1166"/>
    </location>
</feature>
<feature type="modified residue" description="Phosphoserine" evidence="1">
    <location>
        <position position="500"/>
    </location>
</feature>
<feature type="modified residue" description="Phosphoserine" evidence="1">
    <location>
        <position position="576"/>
    </location>
</feature>
<feature type="modified residue" description="Phosphoserine" evidence="1">
    <location>
        <position position="691"/>
    </location>
</feature>
<feature type="modified residue" description="Phosphoserine" evidence="1">
    <location>
        <position position="1054"/>
    </location>
</feature>
<feature type="splice variant" id="VSP_060098" description="In isoform 2.">
    <location>
        <begin position="1"/>
        <end position="366"/>
    </location>
</feature>
<feature type="splice variant" id="VSP_060099" description="In isoform 2.">
    <location>
        <begin position="1076"/>
        <end position="1225"/>
    </location>
</feature>
<feature type="sequence variant" id="VAR_044057" description="In dbSNP:rs7061150.">
    <original>T</original>
    <variation>I</variation>
    <location>
        <position position="901"/>
    </location>
</feature>
<reference key="1">
    <citation type="journal article" date="2005" name="Nature">
        <title>The DNA sequence of the human X chromosome.</title>
        <authorList>
            <person name="Ross M.T."/>
            <person name="Grafham D.V."/>
            <person name="Coffey A.J."/>
            <person name="Scherer S."/>
            <person name="McLay K."/>
            <person name="Muzny D."/>
            <person name="Platzer M."/>
            <person name="Howell G.R."/>
            <person name="Burrows C."/>
            <person name="Bird C.P."/>
            <person name="Frankish A."/>
            <person name="Lovell F.L."/>
            <person name="Howe K.L."/>
            <person name="Ashurst J.L."/>
            <person name="Fulton R.S."/>
            <person name="Sudbrak R."/>
            <person name="Wen G."/>
            <person name="Jones M.C."/>
            <person name="Hurles M.E."/>
            <person name="Andrews T.D."/>
            <person name="Scott C.E."/>
            <person name="Searle S."/>
            <person name="Ramser J."/>
            <person name="Whittaker A."/>
            <person name="Deadman R."/>
            <person name="Carter N.P."/>
            <person name="Hunt S.E."/>
            <person name="Chen R."/>
            <person name="Cree A."/>
            <person name="Gunaratne P."/>
            <person name="Havlak P."/>
            <person name="Hodgson A."/>
            <person name="Metzker M.L."/>
            <person name="Richards S."/>
            <person name="Scott G."/>
            <person name="Steffen D."/>
            <person name="Sodergren E."/>
            <person name="Wheeler D.A."/>
            <person name="Worley K.C."/>
            <person name="Ainscough R."/>
            <person name="Ambrose K.D."/>
            <person name="Ansari-Lari M.A."/>
            <person name="Aradhya S."/>
            <person name="Ashwell R.I."/>
            <person name="Babbage A.K."/>
            <person name="Bagguley C.L."/>
            <person name="Ballabio A."/>
            <person name="Banerjee R."/>
            <person name="Barker G.E."/>
            <person name="Barlow K.F."/>
            <person name="Barrett I.P."/>
            <person name="Bates K.N."/>
            <person name="Beare D.M."/>
            <person name="Beasley H."/>
            <person name="Beasley O."/>
            <person name="Beck A."/>
            <person name="Bethel G."/>
            <person name="Blechschmidt K."/>
            <person name="Brady N."/>
            <person name="Bray-Allen S."/>
            <person name="Bridgeman A.M."/>
            <person name="Brown A.J."/>
            <person name="Brown M.J."/>
            <person name="Bonnin D."/>
            <person name="Bruford E.A."/>
            <person name="Buhay C."/>
            <person name="Burch P."/>
            <person name="Burford D."/>
            <person name="Burgess J."/>
            <person name="Burrill W."/>
            <person name="Burton J."/>
            <person name="Bye J.M."/>
            <person name="Carder C."/>
            <person name="Carrel L."/>
            <person name="Chako J."/>
            <person name="Chapman J.C."/>
            <person name="Chavez D."/>
            <person name="Chen E."/>
            <person name="Chen G."/>
            <person name="Chen Y."/>
            <person name="Chen Z."/>
            <person name="Chinault C."/>
            <person name="Ciccodicola A."/>
            <person name="Clark S.Y."/>
            <person name="Clarke G."/>
            <person name="Clee C.M."/>
            <person name="Clegg S."/>
            <person name="Clerc-Blankenburg K."/>
            <person name="Clifford K."/>
            <person name="Cobley V."/>
            <person name="Cole C.G."/>
            <person name="Conquer J.S."/>
            <person name="Corby N."/>
            <person name="Connor R.E."/>
            <person name="David R."/>
            <person name="Davies J."/>
            <person name="Davis C."/>
            <person name="Davis J."/>
            <person name="Delgado O."/>
            <person name="Deshazo D."/>
            <person name="Dhami P."/>
            <person name="Ding Y."/>
            <person name="Dinh H."/>
            <person name="Dodsworth S."/>
            <person name="Draper H."/>
            <person name="Dugan-Rocha S."/>
            <person name="Dunham A."/>
            <person name="Dunn M."/>
            <person name="Durbin K.J."/>
            <person name="Dutta I."/>
            <person name="Eades T."/>
            <person name="Ellwood M."/>
            <person name="Emery-Cohen A."/>
            <person name="Errington H."/>
            <person name="Evans K.L."/>
            <person name="Faulkner L."/>
            <person name="Francis F."/>
            <person name="Frankland J."/>
            <person name="Fraser A.E."/>
            <person name="Galgoczy P."/>
            <person name="Gilbert J."/>
            <person name="Gill R."/>
            <person name="Gloeckner G."/>
            <person name="Gregory S.G."/>
            <person name="Gribble S."/>
            <person name="Griffiths C."/>
            <person name="Grocock R."/>
            <person name="Gu Y."/>
            <person name="Gwilliam R."/>
            <person name="Hamilton C."/>
            <person name="Hart E.A."/>
            <person name="Hawes A."/>
            <person name="Heath P.D."/>
            <person name="Heitmann K."/>
            <person name="Hennig S."/>
            <person name="Hernandez J."/>
            <person name="Hinzmann B."/>
            <person name="Ho S."/>
            <person name="Hoffs M."/>
            <person name="Howden P.J."/>
            <person name="Huckle E.J."/>
            <person name="Hume J."/>
            <person name="Hunt P.J."/>
            <person name="Hunt A.R."/>
            <person name="Isherwood J."/>
            <person name="Jacob L."/>
            <person name="Johnson D."/>
            <person name="Jones S."/>
            <person name="de Jong P.J."/>
            <person name="Joseph S.S."/>
            <person name="Keenan S."/>
            <person name="Kelly S."/>
            <person name="Kershaw J.K."/>
            <person name="Khan Z."/>
            <person name="Kioschis P."/>
            <person name="Klages S."/>
            <person name="Knights A.J."/>
            <person name="Kosiura A."/>
            <person name="Kovar-Smith C."/>
            <person name="Laird G.K."/>
            <person name="Langford C."/>
            <person name="Lawlor S."/>
            <person name="Leversha M."/>
            <person name="Lewis L."/>
            <person name="Liu W."/>
            <person name="Lloyd C."/>
            <person name="Lloyd D.M."/>
            <person name="Loulseged H."/>
            <person name="Loveland J.E."/>
            <person name="Lovell J.D."/>
            <person name="Lozado R."/>
            <person name="Lu J."/>
            <person name="Lyne R."/>
            <person name="Ma J."/>
            <person name="Maheshwari M."/>
            <person name="Matthews L.H."/>
            <person name="McDowall J."/>
            <person name="McLaren S."/>
            <person name="McMurray A."/>
            <person name="Meidl P."/>
            <person name="Meitinger T."/>
            <person name="Milne S."/>
            <person name="Miner G."/>
            <person name="Mistry S.L."/>
            <person name="Morgan M."/>
            <person name="Morris S."/>
            <person name="Mueller I."/>
            <person name="Mullikin J.C."/>
            <person name="Nguyen N."/>
            <person name="Nordsiek G."/>
            <person name="Nyakatura G."/>
            <person name="O'dell C.N."/>
            <person name="Okwuonu G."/>
            <person name="Palmer S."/>
            <person name="Pandian R."/>
            <person name="Parker D."/>
            <person name="Parrish J."/>
            <person name="Pasternak S."/>
            <person name="Patel D."/>
            <person name="Pearce A.V."/>
            <person name="Pearson D.M."/>
            <person name="Pelan S.E."/>
            <person name="Perez L."/>
            <person name="Porter K.M."/>
            <person name="Ramsey Y."/>
            <person name="Reichwald K."/>
            <person name="Rhodes S."/>
            <person name="Ridler K.A."/>
            <person name="Schlessinger D."/>
            <person name="Schueler M.G."/>
            <person name="Sehra H.K."/>
            <person name="Shaw-Smith C."/>
            <person name="Shen H."/>
            <person name="Sheridan E.M."/>
            <person name="Shownkeen R."/>
            <person name="Skuce C.D."/>
            <person name="Smith M.L."/>
            <person name="Sotheran E.C."/>
            <person name="Steingruber H.E."/>
            <person name="Steward C.A."/>
            <person name="Storey R."/>
            <person name="Swann R.M."/>
            <person name="Swarbreck D."/>
            <person name="Tabor P.E."/>
            <person name="Taudien S."/>
            <person name="Taylor T."/>
            <person name="Teague B."/>
            <person name="Thomas K."/>
            <person name="Thorpe A."/>
            <person name="Timms K."/>
            <person name="Tracey A."/>
            <person name="Trevanion S."/>
            <person name="Tromans A.C."/>
            <person name="d'Urso M."/>
            <person name="Verduzco D."/>
            <person name="Villasana D."/>
            <person name="Waldron L."/>
            <person name="Wall M."/>
            <person name="Wang Q."/>
            <person name="Warren J."/>
            <person name="Warry G.L."/>
            <person name="Wei X."/>
            <person name="West A."/>
            <person name="Whitehead S.L."/>
            <person name="Whiteley M.N."/>
            <person name="Wilkinson J.E."/>
            <person name="Willey D.L."/>
            <person name="Williams G."/>
            <person name="Williams L."/>
            <person name="Williamson A."/>
            <person name="Williamson H."/>
            <person name="Wilming L."/>
            <person name="Woodmansey R.L."/>
            <person name="Wray P.W."/>
            <person name="Yen J."/>
            <person name="Zhang J."/>
            <person name="Zhou J."/>
            <person name="Zoghbi H."/>
            <person name="Zorilla S."/>
            <person name="Buck D."/>
            <person name="Reinhardt R."/>
            <person name="Poustka A."/>
            <person name="Rosenthal A."/>
            <person name="Lehrach H."/>
            <person name="Meindl A."/>
            <person name="Minx P.J."/>
            <person name="Hillier L.W."/>
            <person name="Willard H.F."/>
            <person name="Wilson R.K."/>
            <person name="Waterston R.H."/>
            <person name="Rice C.M."/>
            <person name="Vaudin M."/>
            <person name="Coulson A."/>
            <person name="Nelson D.L."/>
            <person name="Weinstock G."/>
            <person name="Sulston J.E."/>
            <person name="Durbin R.M."/>
            <person name="Hubbard T."/>
            <person name="Gibbs R.A."/>
            <person name="Beck S."/>
            <person name="Rogers J."/>
            <person name="Bentley D.R."/>
        </authorList>
    </citation>
    <scope>NUCLEOTIDE SEQUENCE [LARGE SCALE GENOMIC DNA]</scope>
</reference>
<reference key="2">
    <citation type="journal article" date="2004" name="Genome Res.">
        <title>The status, quality, and expansion of the NIH full-length cDNA project: the Mammalian Gene Collection (MGC).</title>
        <authorList>
            <consortium name="The MGC Project Team"/>
        </authorList>
    </citation>
    <scope>NUCLEOTIDE SEQUENCE [LARGE SCALE MRNA] (ISOFORM 2)</scope>
    <source>
        <tissue>Brain</tissue>
    </source>
</reference>
<reference key="3">
    <citation type="journal article" date="2008" name="Proc. Natl. Acad. Sci. U.S.A.">
        <title>A quantitative atlas of mitotic phosphorylation.</title>
        <authorList>
            <person name="Dephoure N."/>
            <person name="Zhou C."/>
            <person name="Villen J."/>
            <person name="Beausoleil S.A."/>
            <person name="Bakalarski C.E."/>
            <person name="Elledge S.J."/>
            <person name="Gygi S.P."/>
        </authorList>
    </citation>
    <scope>IDENTIFICATION BY MASS SPECTROMETRY [LARGE SCALE ANALYSIS]</scope>
    <source>
        <tissue>Cervix carcinoma</tissue>
    </source>
</reference>
<evidence type="ECO:0000250" key="1">
    <source>
        <dbReference type="UniProtKB" id="B1AXH1"/>
    </source>
</evidence>
<evidence type="ECO:0000256" key="2">
    <source>
        <dbReference type="SAM" id="MobiDB-lite"/>
    </source>
</evidence>
<evidence type="ECO:0000305" key="3"/>
<evidence type="ECO:0000312" key="4">
    <source>
        <dbReference type="HGNC" id="HGNC:33737"/>
    </source>
</evidence>
<accession>Q5HYW2</accession>
<accession>A0A0J9YY34</accession>
<accession>B2RN94</accession>
<sequence length="1225" mass="133286">MPFYRRTVVPQRLCPRNPPQQLAELRDVSHLAALSLLRQLADLCGHSLALLEDLEGHLLALGRRTDSLYRRTVRLRRRLPCRLLGPEEDEEELAAANSGRENATATAHSRSSWRQPVNVFLSSGRPPSVEELLREAQLNLQSLLQEEYEEQYSEARLVGQTFRSSDEATKPTPNPRPQSARRLEFILMPTKRQLSEDETTTQGVRAPEASLSLSTTADKQTAWNSLFPLPILEEKRWPQLCSTQSDIVPINISGQQFDKHASLRHSLFNTETAVNPKSTLRRRRTIIGFSNFSQRDQGHSNSPAGSVAHSTTSDIRPSHSVPEGVHGRVAVGQDARFPSLTSPVLRTPSSEPDEPHQARSGPNPPGMESMGMVYSVPSSCNGPTESTFSTSWKGDAFTYMTPSATSQSNQVNENGKNPSCGNSWVSLNKVPPLVPKEAATLLVARDNPAGCSGSAGYPERLIQQRHMPERPSKIGLLTSGTSRLETGPGGASRFRERSLSVPTDSGTTDVDYDEEQKANEACALPFASTSSEGSNSADNIASLSAQQEAQHRRQRSKSISLRKAKKKPSPPTRSVSLVKDEPGLLPEGGSALPKDQRPKSLCLSLEHQGHHSSHPDAQGHPAIPNHKDPESTQFSHHWYLTDWKSGDTYQSLSSSSTATGTTVIECTQVQGSSESLASPSTSRATTPSQLSIEVEAREISSPGRPPGLMSPSSGYSSQSETPTPTVSMSLTLGHLPPPSSSVRVRPVVPERKSSLPPTSPMEKFPKSRLSFDLPLTSSPNLDLSGMSISIRSKTKVSRHHSETNFGVKLAQKTNPNQPIMPMVTQSDLRSVRLRSVSKSEPEDDIESPEYAEEPRAEEVFTLPERKTKPPVAEKPPVARRPPSLVHKPPSVPEEYALTSPTLAMPPRSSIQHARPLPQDSYTVVRKPKPSSFPDGRSPGESTAPSSLVFTPFASSSDAFFSGTQQPPQGSVEDEGPKVRVLPERISLQSQEEAEKKKGKIPPPVPKKPSVLYLPLTSPTAQMEAYVAEPRLPLSPIITLEEDTKCPATGDDLQSLGQRVTSTPQADSEREASPLGSSVEPGTEEKSLISDKTAEWIAEDDDDVFVASRTTEDLFTVIHRSKRKLLGWKEPGEAFVGGRTSSHSPIKNTAESPISESTATAGSGSSANLDAGRNDDFKALLQKKGSKATPRSRPSAAELLKTTNPLARRIIAQFSKDYETTDNPST</sequence>
<dbReference type="EMBL" id="BX119917">
    <property type="status" value="NOT_ANNOTATED_CDS"/>
    <property type="molecule type" value="Genomic_DNA"/>
</dbReference>
<dbReference type="EMBL" id="AL929401">
    <property type="status" value="NOT_ANNOTATED_CDS"/>
    <property type="molecule type" value="Genomic_DNA"/>
</dbReference>
<dbReference type="EMBL" id="BC136756">
    <property type="protein sequence ID" value="AAI36757.1"/>
    <property type="molecule type" value="mRNA"/>
</dbReference>
<dbReference type="CCDS" id="CCDS87759.1">
    <molecule id="Q5HYW2-1"/>
</dbReference>
<dbReference type="RefSeq" id="NP_001013649.2">
    <molecule id="Q5HYW2-1"/>
    <property type="nucleotide sequence ID" value="NM_001013627.3"/>
</dbReference>
<dbReference type="FunCoup" id="Q5HYW2">
    <property type="interactions" value="136"/>
</dbReference>
<dbReference type="IntAct" id="Q5HYW2">
    <property type="interactions" value="49"/>
</dbReference>
<dbReference type="STRING" id="9606.ENSP00000488668"/>
<dbReference type="GlyGen" id="Q5HYW2">
    <property type="glycosylation" value="4 sites, 1 O-linked glycan (1 site)"/>
</dbReference>
<dbReference type="iPTMnet" id="Q5HYW2"/>
<dbReference type="PhosphoSitePlus" id="Q5HYW2"/>
<dbReference type="BioMuta" id="NHSL2"/>
<dbReference type="DMDM" id="74741562"/>
<dbReference type="jPOST" id="Q5HYW2"/>
<dbReference type="MassIVE" id="Q5HYW2"/>
<dbReference type="PaxDb" id="9606-ENSP00000424079"/>
<dbReference type="PeptideAtlas" id="Q5HYW2"/>
<dbReference type="ProteomicsDB" id="62962"/>
<dbReference type="Antibodypedia" id="35138">
    <property type="antibodies" value="17 antibodies from 7 providers"/>
</dbReference>
<dbReference type="DNASU" id="340527"/>
<dbReference type="Ensembl" id="ENST00000510661.2">
    <molecule id="Q5HYW2-2"/>
    <property type="protein sequence ID" value="ENSP00000424079.2"/>
    <property type="gene ID" value="ENSG00000204131.11"/>
</dbReference>
<dbReference type="Ensembl" id="ENST00000633930.2">
    <molecule id="Q5HYW2-1"/>
    <property type="protein sequence ID" value="ENSP00000488668.1"/>
    <property type="gene ID" value="ENSG00000204131.11"/>
</dbReference>
<dbReference type="GeneID" id="340527"/>
<dbReference type="KEGG" id="hsa:340527"/>
<dbReference type="MANE-Select" id="ENST00000633930.2">
    <property type="protein sequence ID" value="ENSP00000488668.1"/>
    <property type="RefSeq nucleotide sequence ID" value="NM_001013627.3"/>
    <property type="RefSeq protein sequence ID" value="NP_001013649.2"/>
</dbReference>
<dbReference type="UCSC" id="uc004eak.1">
    <molecule id="Q5HYW2-1"/>
    <property type="organism name" value="human"/>
</dbReference>
<dbReference type="AGR" id="HGNC:33737"/>
<dbReference type="CTD" id="340527"/>
<dbReference type="DisGeNET" id="340527"/>
<dbReference type="GeneCards" id="NHSL2"/>
<dbReference type="HGNC" id="HGNC:33737">
    <property type="gene designation" value="NHSL2"/>
</dbReference>
<dbReference type="HPA" id="ENSG00000204131">
    <property type="expression patterns" value="Tissue enhanced (brain)"/>
</dbReference>
<dbReference type="MIM" id="301093">
    <property type="type" value="gene"/>
</dbReference>
<dbReference type="neXtProt" id="NX_Q5HYW2"/>
<dbReference type="OpenTargets" id="ENSG00000204131"/>
<dbReference type="VEuPathDB" id="HostDB:ENSG00000204131"/>
<dbReference type="eggNOG" id="ENOG502QQ7S">
    <property type="taxonomic scope" value="Eukaryota"/>
</dbReference>
<dbReference type="GeneTree" id="ENSGT00950000182963"/>
<dbReference type="InParanoid" id="Q5HYW2"/>
<dbReference type="OMA" id="KSTIHHV"/>
<dbReference type="OrthoDB" id="9906533at2759"/>
<dbReference type="PAN-GO" id="Q5HYW2">
    <property type="GO annotations" value="1 GO annotation based on evolutionary models"/>
</dbReference>
<dbReference type="PhylomeDB" id="Q5HYW2"/>
<dbReference type="PathwayCommons" id="Q5HYW2"/>
<dbReference type="SignaLink" id="Q5HYW2"/>
<dbReference type="BioGRID-ORCS" id="340527">
    <property type="hits" value="7 hits in 276 CRISPR screens"/>
</dbReference>
<dbReference type="ChiTaRS" id="NHSL2">
    <property type="organism name" value="human"/>
</dbReference>
<dbReference type="GenomeRNAi" id="340527"/>
<dbReference type="Pharos" id="Q5HYW2">
    <property type="development level" value="Tdark"/>
</dbReference>
<dbReference type="PRO" id="PR:Q5HYW2"/>
<dbReference type="Proteomes" id="UP000005640">
    <property type="component" value="Chromosome X"/>
</dbReference>
<dbReference type="RNAct" id="Q5HYW2">
    <property type="molecule type" value="protein"/>
</dbReference>
<dbReference type="Bgee" id="ENSG00000204131">
    <property type="expression patterns" value="Expressed in sural nerve and 138 other cell types or tissues"/>
</dbReference>
<dbReference type="ExpressionAtlas" id="Q5HYW2">
    <property type="expression patterns" value="baseline and differential"/>
</dbReference>
<dbReference type="GO" id="GO:0030154">
    <property type="term" value="P:cell differentiation"/>
    <property type="evidence" value="ECO:0000318"/>
    <property type="project" value="GO_Central"/>
</dbReference>
<dbReference type="FunFam" id="1.20.5.340:FF:000042">
    <property type="entry name" value="NHS like 2"/>
    <property type="match status" value="1"/>
</dbReference>
<dbReference type="Gene3D" id="1.20.5.340">
    <property type="match status" value="1"/>
</dbReference>
<dbReference type="InterPro" id="IPR024845">
    <property type="entry name" value="NHS-like"/>
</dbReference>
<dbReference type="PANTHER" id="PTHR23039">
    <property type="entry name" value="NANCE-HORAN SYNDROME PROTEIN"/>
    <property type="match status" value="1"/>
</dbReference>
<dbReference type="PANTHER" id="PTHR23039:SF2">
    <property type="entry name" value="NHS-LIKE PROTEIN 2"/>
    <property type="match status" value="1"/>
</dbReference>
<dbReference type="Pfam" id="PF15273">
    <property type="entry name" value="NHS"/>
    <property type="match status" value="3"/>
</dbReference>
<gene>
    <name evidence="4" type="primary">NHSL2</name>
</gene>